<sequence>NRTDVQCQHRWQKVLNPELNKGPWTKEEDQRVIEHVQKYGPKRWSDIAKHLKGRIGKQCRERWHNHLNPEVKKTSWTEEEDRIIYQAHKRLGNRWAEIAKLLPGRTDNAVKNHWNSTMRRKVEQEGYPQESSKAGPPSATTGFQKSSHLMAFAHNPPAGPLPGAGQAPLGSDYPYYHIAEPQNVPGQIPYPVALHINIINVPQPAAAAIQRHYTDEDPEKEKRIKELELLLMSTENELKGQQALPTQNHTANYPGWHSTTVADNTRTSGDNAPVSCLGEHHHCTPSPPVDHGCLPEESASPARCMIVHQSNILDNVKNLLEFAETLQLIDSFLNTSSNHENLNLDNPALTSTPVCGHKMSVTTPFHKDQTFTEYRKMHGGAV</sequence>
<comment type="function">
    <text>DNA-binding protein that specifically recognizes the sequence 5'-YAAC[GT]G-3'. The v-Myb oncogene transforms immature myelomonocytic avian cells in culture and induces myeloblastosis (myeloid leukemia) in chickens.</text>
</comment>
<comment type="subcellular location">
    <subcellularLocation>
        <location evidence="5">Host nucleus</location>
    </subcellularLocation>
</comment>
<comment type="domain">
    <text>The absence of the N- and/or C-terminal may prevent homodimer formation, leading to DNA-binding and its increased transactivation activity.</text>
</comment>
<comment type="sequence caution" evidence="5">
    <conflict type="erroneous initiation">
        <sequence resource="EMBL-CDS" id="AAA42553"/>
    </conflict>
</comment>
<comment type="sequence caution" evidence="5">
    <conflict type="erroneous initiation">
        <sequence resource="EMBL-CDS" id="AAC15907"/>
    </conflict>
</comment>
<feature type="chain" id="PRO_0000197053" description="Transforming protein Myb">
    <location>
        <begin position="1"/>
        <end position="382"/>
    </location>
</feature>
<feature type="domain" description="Myb-like" evidence="2">
    <location>
        <begin position="1"/>
        <end position="15"/>
    </location>
</feature>
<feature type="domain" description="HTH myb-type 1" evidence="3">
    <location>
        <begin position="16"/>
        <end position="71"/>
    </location>
</feature>
<feature type="domain" description="HTH myb-type 2" evidence="3">
    <location>
        <begin position="72"/>
        <end position="122"/>
    </location>
</feature>
<feature type="DNA-binding region" description="H-T-H motif" evidence="3">
    <location>
        <begin position="44"/>
        <end position="67"/>
    </location>
</feature>
<feature type="DNA-binding region" description="H-T-H motif" evidence="3">
    <location>
        <begin position="95"/>
        <end position="118"/>
    </location>
</feature>
<feature type="region of interest" description="Disordered" evidence="4">
    <location>
        <begin position="119"/>
        <end position="143"/>
    </location>
</feature>
<feature type="region of interest" description="Transcriptional activation domain" evidence="1">
    <location>
        <begin position="204"/>
        <end position="256"/>
    </location>
</feature>
<feature type="region of interest" description="Negative regulatory domain (incomplete)" evidence="1">
    <location>
        <begin position="257"/>
        <end position="376"/>
    </location>
</feature>
<feature type="region of interest" description="Leucine-zipper">
    <location>
        <begin position="305"/>
        <end position="326"/>
    </location>
</feature>
<feature type="helix" evidence="6">
    <location>
        <begin position="26"/>
        <end position="38"/>
    </location>
</feature>
<feature type="helix" evidence="6">
    <location>
        <begin position="44"/>
        <end position="50"/>
    </location>
</feature>
<feature type="strand" evidence="6">
    <location>
        <begin position="51"/>
        <end position="53"/>
    </location>
</feature>
<feature type="helix" evidence="6">
    <location>
        <begin position="56"/>
        <end position="65"/>
    </location>
</feature>
<feature type="strand" evidence="6">
    <location>
        <begin position="69"/>
        <end position="71"/>
    </location>
</feature>
<feature type="helix" evidence="6">
    <location>
        <begin position="78"/>
        <end position="91"/>
    </location>
</feature>
<feature type="helix" evidence="6">
    <location>
        <begin position="95"/>
        <end position="98"/>
    </location>
</feature>
<feature type="helix" evidence="6">
    <location>
        <begin position="99"/>
        <end position="101"/>
    </location>
</feature>
<feature type="helix" evidence="6">
    <location>
        <begin position="107"/>
        <end position="115"/>
    </location>
</feature>
<feature type="turn" evidence="6">
    <location>
        <begin position="116"/>
        <end position="119"/>
    </location>
</feature>
<accession>P01104</accession>
<accession>Q83871</accession>
<accession>Q90954</accession>
<protein>
    <recommendedName>
        <fullName>Transforming protein Myb</fullName>
    </recommendedName>
</protein>
<keyword id="KW-0002">3D-structure</keyword>
<keyword id="KW-0238">DNA-binding</keyword>
<keyword id="KW-1048">Host nucleus</keyword>
<keyword id="KW-0553">Oncogene</keyword>
<keyword id="KW-0677">Repeat</keyword>
<evidence type="ECO:0000250" key="1"/>
<evidence type="ECO:0000255" key="2">
    <source>
        <dbReference type="PROSITE-ProRule" id="PRU00133"/>
    </source>
</evidence>
<evidence type="ECO:0000255" key="3">
    <source>
        <dbReference type="PROSITE-ProRule" id="PRU00625"/>
    </source>
</evidence>
<evidence type="ECO:0000256" key="4">
    <source>
        <dbReference type="SAM" id="MobiDB-lite"/>
    </source>
</evidence>
<evidence type="ECO:0000305" key="5"/>
<evidence type="ECO:0007829" key="6">
    <source>
        <dbReference type="PDB" id="1H8A"/>
    </source>
</evidence>
<organismHost>
    <name type="scientific">Galliformes</name>
    <dbReference type="NCBI Taxonomy" id="8976"/>
</organismHost>
<gene>
    <name type="primary">V-MYB</name>
</gene>
<organism>
    <name type="scientific">Avian myeloblastosis virus</name>
    <name type="common">AMV</name>
    <dbReference type="NCBI Taxonomy" id="11866"/>
    <lineage>
        <taxon>Viruses</taxon>
        <taxon>Riboviria</taxon>
        <taxon>Pararnavirae</taxon>
        <taxon>Artverviricota</taxon>
        <taxon>Revtraviricetes</taxon>
        <taxon>Ortervirales</taxon>
        <taxon>Retroviridae</taxon>
        <taxon>Orthoretrovirinae</taxon>
        <taxon>Alpharetrovirus</taxon>
    </lineage>
</organism>
<name>MYB_AVIMB</name>
<reference key="1">
    <citation type="journal article" date="1982" name="Cell">
        <title>Nucleotide sequence of the retroviral leukemia gene v-myb and its cellular progenitor c-myb: the architecture of a transduced oncogene.</title>
        <authorList>
            <person name="Klempnauer K.-H."/>
            <person name="Gonda T.J."/>
            <person name="Bishop J.M."/>
        </authorList>
    </citation>
    <scope>NUCLEOTIDE SEQUENCE</scope>
</reference>
<reference key="2">
    <citation type="journal article" date="1982" name="Science">
        <title>Nucleotide sequence of the transforming gene of avian myeloblastosis virus.</title>
        <authorList>
            <person name="Rushlow K.E."/>
            <person name="Lautenberger J.A."/>
            <person name="Papas T.S."/>
            <person name="Baluda M.A."/>
            <person name="Perbal B."/>
            <person name="Chirikjian J.G."/>
            <person name="Reddy E.P."/>
        </authorList>
    </citation>
    <scope>NUCLEOTIDE SEQUENCE [GENOMIC DNA]</scope>
</reference>
<reference key="3">
    <citation type="journal article" date="1994" name="Oncogene">
        <title>Anatomy of an integrated avian myeloblastosis provirus: structure and function.</title>
        <authorList>
            <person name="Baluda M.A."/>
            <person name="Reddy E.P."/>
        </authorList>
    </citation>
    <scope>NUCLEOTIDE SEQUENCE</scope>
</reference>
<proteinExistence type="evidence at protein level"/>
<dbReference type="EMBL" id="J02012">
    <property type="protein sequence ID" value="AAA42553.1"/>
    <property type="status" value="ALT_INIT"/>
    <property type="molecule type" value="Genomic_RNA"/>
</dbReference>
<dbReference type="EMBL" id="S74099">
    <property type="protein sequence ID" value="AAB31930.2"/>
    <property type="molecule type" value="Genomic_RNA"/>
</dbReference>
<dbReference type="EMBL" id="J02013">
    <property type="protein sequence ID" value="AAC15907.1"/>
    <property type="status" value="ALT_INIT"/>
    <property type="molecule type" value="Genomic_DNA"/>
</dbReference>
<dbReference type="PIR" id="A36314">
    <property type="entry name" value="QOYV"/>
</dbReference>
<dbReference type="PDB" id="1H8A">
    <property type="method" value="X-ray"/>
    <property type="resolution" value="2.23 A"/>
    <property type="chains" value="C=1-122"/>
</dbReference>
<dbReference type="PDBsum" id="1H8A"/>
<dbReference type="BMRB" id="P01104"/>
<dbReference type="SMR" id="P01104"/>
<dbReference type="IntAct" id="P01104">
    <property type="interactions" value="2"/>
</dbReference>
<dbReference type="EvolutionaryTrace" id="P01104"/>
<dbReference type="Proteomes" id="UP000235313">
    <property type="component" value="Genome"/>
</dbReference>
<dbReference type="GO" id="GO:0042025">
    <property type="term" value="C:host cell nucleus"/>
    <property type="evidence" value="ECO:0007669"/>
    <property type="project" value="UniProtKB-SubCell"/>
</dbReference>
<dbReference type="GO" id="GO:0000981">
    <property type="term" value="F:DNA-binding transcription factor activity, RNA polymerase II-specific"/>
    <property type="evidence" value="ECO:0007669"/>
    <property type="project" value="TreeGrafter"/>
</dbReference>
<dbReference type="GO" id="GO:0000978">
    <property type="term" value="F:RNA polymerase II cis-regulatory region sequence-specific DNA binding"/>
    <property type="evidence" value="ECO:0007669"/>
    <property type="project" value="TreeGrafter"/>
</dbReference>
<dbReference type="CDD" id="cd00167">
    <property type="entry name" value="SANT"/>
    <property type="match status" value="2"/>
</dbReference>
<dbReference type="FunFam" id="1.10.10.60:FF:000010">
    <property type="entry name" value="Transcriptional activator Myb isoform A"/>
    <property type="match status" value="1"/>
</dbReference>
<dbReference type="FunFam" id="1.10.10.60:FF:000042">
    <property type="entry name" value="Transcriptional activator Myb isoform A"/>
    <property type="match status" value="1"/>
</dbReference>
<dbReference type="Gene3D" id="1.10.10.60">
    <property type="entry name" value="Homeodomain-like"/>
    <property type="match status" value="2"/>
</dbReference>
<dbReference type="InterPro" id="IPR015395">
    <property type="entry name" value="C-myb_C"/>
</dbReference>
<dbReference type="InterPro" id="IPR009057">
    <property type="entry name" value="Homeodomain-like_sf"/>
</dbReference>
<dbReference type="InterPro" id="IPR017930">
    <property type="entry name" value="Myb_dom"/>
</dbReference>
<dbReference type="InterPro" id="IPR050560">
    <property type="entry name" value="MYB_TF"/>
</dbReference>
<dbReference type="InterPro" id="IPR001005">
    <property type="entry name" value="SANT/Myb"/>
</dbReference>
<dbReference type="InterPro" id="IPR012642">
    <property type="entry name" value="Tscrpt_reg_Wos2-domain"/>
</dbReference>
<dbReference type="PANTHER" id="PTHR45614">
    <property type="entry name" value="MYB PROTEIN-RELATED"/>
    <property type="match status" value="1"/>
</dbReference>
<dbReference type="PANTHER" id="PTHR45614:SF51">
    <property type="entry name" value="MYB-LIKE DNA-BINDING PROTEIN BAS1"/>
    <property type="match status" value="1"/>
</dbReference>
<dbReference type="Pfam" id="PF09316">
    <property type="entry name" value="Cmyb_C"/>
    <property type="match status" value="1"/>
</dbReference>
<dbReference type="Pfam" id="PF07988">
    <property type="entry name" value="LMSTEN"/>
    <property type="match status" value="1"/>
</dbReference>
<dbReference type="Pfam" id="PF00249">
    <property type="entry name" value="Myb_DNA-binding"/>
    <property type="match status" value="2"/>
</dbReference>
<dbReference type="SMART" id="SM00717">
    <property type="entry name" value="SANT"/>
    <property type="match status" value="2"/>
</dbReference>
<dbReference type="SUPFAM" id="SSF46689">
    <property type="entry name" value="Homeodomain-like"/>
    <property type="match status" value="1"/>
</dbReference>
<dbReference type="PROSITE" id="PS51294">
    <property type="entry name" value="HTH_MYB"/>
    <property type="match status" value="2"/>
</dbReference>
<dbReference type="PROSITE" id="PS50090">
    <property type="entry name" value="MYB_LIKE"/>
    <property type="match status" value="1"/>
</dbReference>